<keyword id="KW-0963">Cytoplasm</keyword>
<keyword id="KW-0489">Methyltransferase</keyword>
<keyword id="KW-1185">Reference proteome</keyword>
<keyword id="KW-0949">S-adenosyl-L-methionine</keyword>
<keyword id="KW-0808">Transferase</keyword>
<evidence type="ECO:0000255" key="1">
    <source>
        <dbReference type="HAMAP-Rule" id="MF_00090"/>
    </source>
</evidence>
<evidence type="ECO:0000256" key="2">
    <source>
        <dbReference type="SAM" id="MobiDB-lite"/>
    </source>
</evidence>
<evidence type="ECO:0000305" key="3"/>
<feature type="chain" id="PRO_0000351814" description="Protein-L-isoaspartate O-methyltransferase 2">
    <location>
        <begin position="1"/>
        <end position="243"/>
    </location>
</feature>
<feature type="region of interest" description="Disordered" evidence="2">
    <location>
        <begin position="21"/>
        <end position="42"/>
    </location>
</feature>
<feature type="compositionally biased region" description="Basic and acidic residues" evidence="2">
    <location>
        <begin position="23"/>
        <end position="42"/>
    </location>
</feature>
<feature type="active site" evidence="1">
    <location>
        <position position="94"/>
    </location>
</feature>
<name>PIMT2_ANADF</name>
<proteinExistence type="inferred from homology"/>
<sequence>MLARSLLPALALLLAATAGGDACADRGHPSAERSTPETERRRMVEEQLAARGIRDRRVLEAMGKVPRERFVPEQWRSLAYLDEPLPIGRGQTISQPYVVAFMAQALALRGGERVLEVGSGSGYAAAVLAHLAGAVYGIELEPELHARSVETLAELGYGNVHLRRGDGFLGWPERAPFRAIVVSCAMEEIPAPLWEQLVQGGRIVYPKGPEGEVQLLVVVTKTARGPREEHLAPVRFVPMRRGG</sequence>
<dbReference type="EC" id="2.1.1.77" evidence="1"/>
<dbReference type="EMBL" id="CP000769">
    <property type="protein sequence ID" value="ABS28299.1"/>
    <property type="status" value="ALT_INIT"/>
    <property type="molecule type" value="Genomic_DNA"/>
</dbReference>
<dbReference type="RefSeq" id="WP_255342597.1">
    <property type="nucleotide sequence ID" value="NC_009675.1"/>
</dbReference>
<dbReference type="SMR" id="A7HHV3"/>
<dbReference type="STRING" id="404589.Anae109_4121"/>
<dbReference type="KEGG" id="afw:Anae109_4121"/>
<dbReference type="eggNOG" id="COG2518">
    <property type="taxonomic scope" value="Bacteria"/>
</dbReference>
<dbReference type="HOGENOM" id="CLU_055432_2_0_7"/>
<dbReference type="Proteomes" id="UP000006382">
    <property type="component" value="Chromosome"/>
</dbReference>
<dbReference type="GO" id="GO:0005737">
    <property type="term" value="C:cytoplasm"/>
    <property type="evidence" value="ECO:0007669"/>
    <property type="project" value="UniProtKB-SubCell"/>
</dbReference>
<dbReference type="GO" id="GO:0004719">
    <property type="term" value="F:protein-L-isoaspartate (D-aspartate) O-methyltransferase activity"/>
    <property type="evidence" value="ECO:0007669"/>
    <property type="project" value="UniProtKB-UniRule"/>
</dbReference>
<dbReference type="GO" id="GO:0032259">
    <property type="term" value="P:methylation"/>
    <property type="evidence" value="ECO:0007669"/>
    <property type="project" value="UniProtKB-KW"/>
</dbReference>
<dbReference type="GO" id="GO:0036211">
    <property type="term" value="P:protein modification process"/>
    <property type="evidence" value="ECO:0007669"/>
    <property type="project" value="UniProtKB-UniRule"/>
</dbReference>
<dbReference type="GO" id="GO:0030091">
    <property type="term" value="P:protein repair"/>
    <property type="evidence" value="ECO:0007669"/>
    <property type="project" value="UniProtKB-UniRule"/>
</dbReference>
<dbReference type="CDD" id="cd02440">
    <property type="entry name" value="AdoMet_MTases"/>
    <property type="match status" value="1"/>
</dbReference>
<dbReference type="FunFam" id="3.40.50.150:FF:000010">
    <property type="entry name" value="Protein-L-isoaspartate O-methyltransferase"/>
    <property type="match status" value="1"/>
</dbReference>
<dbReference type="Gene3D" id="3.40.50.150">
    <property type="entry name" value="Vaccinia Virus protein VP39"/>
    <property type="match status" value="1"/>
</dbReference>
<dbReference type="HAMAP" id="MF_00090">
    <property type="entry name" value="PIMT"/>
    <property type="match status" value="1"/>
</dbReference>
<dbReference type="InterPro" id="IPR000682">
    <property type="entry name" value="PCMT"/>
</dbReference>
<dbReference type="InterPro" id="IPR029063">
    <property type="entry name" value="SAM-dependent_MTases_sf"/>
</dbReference>
<dbReference type="NCBIfam" id="TIGR00080">
    <property type="entry name" value="pimt"/>
    <property type="match status" value="1"/>
</dbReference>
<dbReference type="NCBIfam" id="NF001453">
    <property type="entry name" value="PRK00312.1"/>
    <property type="match status" value="1"/>
</dbReference>
<dbReference type="PANTHER" id="PTHR11579">
    <property type="entry name" value="PROTEIN-L-ISOASPARTATE O-METHYLTRANSFERASE"/>
    <property type="match status" value="1"/>
</dbReference>
<dbReference type="PANTHER" id="PTHR11579:SF0">
    <property type="entry name" value="PROTEIN-L-ISOASPARTATE(D-ASPARTATE) O-METHYLTRANSFERASE"/>
    <property type="match status" value="1"/>
</dbReference>
<dbReference type="Pfam" id="PF01135">
    <property type="entry name" value="PCMT"/>
    <property type="match status" value="1"/>
</dbReference>
<dbReference type="SUPFAM" id="SSF53335">
    <property type="entry name" value="S-adenosyl-L-methionine-dependent methyltransferases"/>
    <property type="match status" value="1"/>
</dbReference>
<organism>
    <name type="scientific">Anaeromyxobacter sp. (strain Fw109-5)</name>
    <dbReference type="NCBI Taxonomy" id="404589"/>
    <lineage>
        <taxon>Bacteria</taxon>
        <taxon>Pseudomonadati</taxon>
        <taxon>Myxococcota</taxon>
        <taxon>Myxococcia</taxon>
        <taxon>Myxococcales</taxon>
        <taxon>Cystobacterineae</taxon>
        <taxon>Anaeromyxobacteraceae</taxon>
        <taxon>Anaeromyxobacter</taxon>
    </lineage>
</organism>
<gene>
    <name evidence="1" type="primary">pcm2</name>
    <name type="ordered locus">Anae109_4121</name>
</gene>
<comment type="function">
    <text evidence="1">Catalyzes the methyl esterification of L-isoaspartyl residues in peptides and proteins that result from spontaneous decomposition of normal L-aspartyl and L-asparaginyl residues. It plays a role in the repair and/or degradation of damaged proteins.</text>
</comment>
<comment type="catalytic activity">
    <reaction evidence="1">
        <text>[protein]-L-isoaspartate + S-adenosyl-L-methionine = [protein]-L-isoaspartate alpha-methyl ester + S-adenosyl-L-homocysteine</text>
        <dbReference type="Rhea" id="RHEA:12705"/>
        <dbReference type="Rhea" id="RHEA-COMP:12143"/>
        <dbReference type="Rhea" id="RHEA-COMP:12144"/>
        <dbReference type="ChEBI" id="CHEBI:57856"/>
        <dbReference type="ChEBI" id="CHEBI:59789"/>
        <dbReference type="ChEBI" id="CHEBI:90596"/>
        <dbReference type="ChEBI" id="CHEBI:90598"/>
        <dbReference type="EC" id="2.1.1.77"/>
    </reaction>
</comment>
<comment type="subcellular location">
    <subcellularLocation>
        <location evidence="1">Cytoplasm</location>
    </subcellularLocation>
</comment>
<comment type="similarity">
    <text evidence="1">Belongs to the methyltransferase superfamily. L-isoaspartyl/D-aspartyl protein methyltransferase family.</text>
</comment>
<comment type="sequence caution" evidence="3">
    <conflict type="erroneous initiation">
        <sequence resource="EMBL-CDS" id="ABS28299"/>
    </conflict>
</comment>
<reference key="1">
    <citation type="journal article" date="2015" name="Genome Announc.">
        <title>Complete genome sequence of Anaeromyxobacter sp. Fw109-5, an anaerobic, metal-reducing bacterium isolated from a contaminated subsurface environment.</title>
        <authorList>
            <person name="Hwang C."/>
            <person name="Copeland A."/>
            <person name="Lucas S."/>
            <person name="Lapidus A."/>
            <person name="Barry K."/>
            <person name="Glavina Del Rio T."/>
            <person name="Dalin E."/>
            <person name="Tice H."/>
            <person name="Pitluck S."/>
            <person name="Sims D."/>
            <person name="Brettin T."/>
            <person name="Bruce D.C."/>
            <person name="Detter J.C."/>
            <person name="Han C.S."/>
            <person name="Schmutz J."/>
            <person name="Larimer F.W."/>
            <person name="Land M.L."/>
            <person name="Hauser L.J."/>
            <person name="Kyrpides N."/>
            <person name="Lykidis A."/>
            <person name="Richardson P."/>
            <person name="Belieav A."/>
            <person name="Sanford R.A."/>
            <person name="Loeffler F.E."/>
            <person name="Fields M.W."/>
        </authorList>
    </citation>
    <scope>NUCLEOTIDE SEQUENCE [LARGE SCALE GENOMIC DNA]</scope>
    <source>
        <strain>Fw109-5</strain>
    </source>
</reference>
<protein>
    <recommendedName>
        <fullName evidence="1">Protein-L-isoaspartate O-methyltransferase 2</fullName>
        <ecNumber evidence="1">2.1.1.77</ecNumber>
    </recommendedName>
    <alternativeName>
        <fullName evidence="1">L-isoaspartyl protein carboxyl methyltransferase 2</fullName>
    </alternativeName>
    <alternativeName>
        <fullName evidence="1">Protein L-isoaspartyl methyltransferase 2</fullName>
    </alternativeName>
    <alternativeName>
        <fullName evidence="1">Protein-beta-aspartate methyltransferase 2</fullName>
        <shortName evidence="1">PIMT 2</shortName>
    </alternativeName>
</protein>
<accession>A7HHV3</accession>